<protein>
    <recommendedName>
        <fullName evidence="1">Ribosomal protein uS12 methylthiotransferase RimO</fullName>
        <shortName evidence="1">uS12 MTTase</shortName>
        <shortName evidence="1">uS12 methylthiotransferase</shortName>
        <ecNumber evidence="1">2.8.4.4</ecNumber>
    </recommendedName>
    <alternativeName>
        <fullName evidence="1">Ribosomal protein uS12 (aspartate-C(3))-methylthiotransferase</fullName>
    </alternativeName>
    <alternativeName>
        <fullName evidence="1">Ribosome maturation factor RimO</fullName>
    </alternativeName>
</protein>
<feature type="chain" id="PRO_0000374794" description="Ribosomal protein uS12 methylthiotransferase RimO">
    <location>
        <begin position="1"/>
        <end position="437"/>
    </location>
</feature>
<feature type="domain" description="MTTase N-terminal" evidence="1">
    <location>
        <begin position="5"/>
        <end position="116"/>
    </location>
</feature>
<feature type="domain" description="Radical SAM core" evidence="2">
    <location>
        <begin position="140"/>
        <end position="369"/>
    </location>
</feature>
<feature type="domain" description="TRAM" evidence="1">
    <location>
        <begin position="372"/>
        <end position="437"/>
    </location>
</feature>
<feature type="binding site" evidence="1">
    <location>
        <position position="14"/>
    </location>
    <ligand>
        <name>[4Fe-4S] cluster</name>
        <dbReference type="ChEBI" id="CHEBI:49883"/>
        <label>1</label>
    </ligand>
</feature>
<feature type="binding site" evidence="1">
    <location>
        <position position="50"/>
    </location>
    <ligand>
        <name>[4Fe-4S] cluster</name>
        <dbReference type="ChEBI" id="CHEBI:49883"/>
        <label>1</label>
    </ligand>
</feature>
<feature type="binding site" evidence="1">
    <location>
        <position position="79"/>
    </location>
    <ligand>
        <name>[4Fe-4S] cluster</name>
        <dbReference type="ChEBI" id="CHEBI:49883"/>
        <label>1</label>
    </ligand>
</feature>
<feature type="binding site" evidence="1">
    <location>
        <position position="154"/>
    </location>
    <ligand>
        <name>[4Fe-4S] cluster</name>
        <dbReference type="ChEBI" id="CHEBI:49883"/>
        <label>2</label>
        <note>4Fe-4S-S-AdoMet</note>
    </ligand>
</feature>
<feature type="binding site" evidence="1">
    <location>
        <position position="158"/>
    </location>
    <ligand>
        <name>[4Fe-4S] cluster</name>
        <dbReference type="ChEBI" id="CHEBI:49883"/>
        <label>2</label>
        <note>4Fe-4S-S-AdoMet</note>
    </ligand>
</feature>
<feature type="binding site" evidence="1">
    <location>
        <position position="161"/>
    </location>
    <ligand>
        <name>[4Fe-4S] cluster</name>
        <dbReference type="ChEBI" id="CHEBI:49883"/>
        <label>2</label>
        <note>4Fe-4S-S-AdoMet</note>
    </ligand>
</feature>
<reference key="1">
    <citation type="journal article" date="2008" name="Proc. Natl. Acad. Sci. U.S.A.">
        <title>The genome of Cyanothece 51142, a unicellular diazotrophic cyanobacterium important in the marine nitrogen cycle.</title>
        <authorList>
            <person name="Welsh E.A."/>
            <person name="Liberton M."/>
            <person name="Stoeckel J."/>
            <person name="Loh T."/>
            <person name="Elvitigala T."/>
            <person name="Wang C."/>
            <person name="Wollam A."/>
            <person name="Fulton R.S."/>
            <person name="Clifton S.W."/>
            <person name="Jacobs J.M."/>
            <person name="Aurora R."/>
            <person name="Ghosh B.K."/>
            <person name="Sherman L.A."/>
            <person name="Smith R.D."/>
            <person name="Wilson R.K."/>
            <person name="Pakrasi H.B."/>
        </authorList>
    </citation>
    <scope>NUCLEOTIDE SEQUENCE [LARGE SCALE GENOMIC DNA]</scope>
    <source>
        <strain>ATCC 51142 / BH68</strain>
    </source>
</reference>
<dbReference type="EC" id="2.8.4.4" evidence="1"/>
<dbReference type="EMBL" id="CP000806">
    <property type="protein sequence ID" value="ACB53785.1"/>
    <property type="molecule type" value="Genomic_DNA"/>
</dbReference>
<dbReference type="RefSeq" id="WP_009543507.1">
    <property type="nucleotide sequence ID" value="NC_010546.1"/>
</dbReference>
<dbReference type="SMR" id="B1WUD1"/>
<dbReference type="STRING" id="43989.cce_4437"/>
<dbReference type="KEGG" id="cyt:cce_4437"/>
<dbReference type="eggNOG" id="COG0621">
    <property type="taxonomic scope" value="Bacteria"/>
</dbReference>
<dbReference type="HOGENOM" id="CLU_018697_0_1_3"/>
<dbReference type="OrthoDB" id="9805215at2"/>
<dbReference type="Proteomes" id="UP000001203">
    <property type="component" value="Chromosome circular"/>
</dbReference>
<dbReference type="GO" id="GO:0005829">
    <property type="term" value="C:cytosol"/>
    <property type="evidence" value="ECO:0007669"/>
    <property type="project" value="TreeGrafter"/>
</dbReference>
<dbReference type="GO" id="GO:0051539">
    <property type="term" value="F:4 iron, 4 sulfur cluster binding"/>
    <property type="evidence" value="ECO:0007669"/>
    <property type="project" value="UniProtKB-UniRule"/>
</dbReference>
<dbReference type="GO" id="GO:0035599">
    <property type="term" value="F:aspartic acid methylthiotransferase activity"/>
    <property type="evidence" value="ECO:0007669"/>
    <property type="project" value="TreeGrafter"/>
</dbReference>
<dbReference type="GO" id="GO:0046872">
    <property type="term" value="F:metal ion binding"/>
    <property type="evidence" value="ECO:0007669"/>
    <property type="project" value="UniProtKB-KW"/>
</dbReference>
<dbReference type="GO" id="GO:0103039">
    <property type="term" value="F:protein methylthiotransferase activity"/>
    <property type="evidence" value="ECO:0007669"/>
    <property type="project" value="UniProtKB-EC"/>
</dbReference>
<dbReference type="GO" id="GO:0006400">
    <property type="term" value="P:tRNA modification"/>
    <property type="evidence" value="ECO:0007669"/>
    <property type="project" value="InterPro"/>
</dbReference>
<dbReference type="CDD" id="cd01335">
    <property type="entry name" value="Radical_SAM"/>
    <property type="match status" value="1"/>
</dbReference>
<dbReference type="FunFam" id="3.40.50.12160:FF:000002">
    <property type="entry name" value="Ribosomal protein S12 methylthiotransferase RimO"/>
    <property type="match status" value="1"/>
</dbReference>
<dbReference type="FunFam" id="3.80.30.20:FF:000001">
    <property type="entry name" value="tRNA-2-methylthio-N(6)-dimethylallyladenosine synthase 2"/>
    <property type="match status" value="1"/>
</dbReference>
<dbReference type="Gene3D" id="3.40.50.12160">
    <property type="entry name" value="Methylthiotransferase, N-terminal domain"/>
    <property type="match status" value="1"/>
</dbReference>
<dbReference type="Gene3D" id="2.40.50.140">
    <property type="entry name" value="Nucleic acid-binding proteins"/>
    <property type="match status" value="1"/>
</dbReference>
<dbReference type="Gene3D" id="3.80.30.20">
    <property type="entry name" value="tm_1862 like domain"/>
    <property type="match status" value="1"/>
</dbReference>
<dbReference type="HAMAP" id="MF_01865">
    <property type="entry name" value="MTTase_RimO"/>
    <property type="match status" value="1"/>
</dbReference>
<dbReference type="InterPro" id="IPR006638">
    <property type="entry name" value="Elp3/MiaA/NifB-like_rSAM"/>
</dbReference>
<dbReference type="InterPro" id="IPR005839">
    <property type="entry name" value="Methylthiotransferase"/>
</dbReference>
<dbReference type="InterPro" id="IPR020612">
    <property type="entry name" value="Methylthiotransferase_CS"/>
</dbReference>
<dbReference type="InterPro" id="IPR013848">
    <property type="entry name" value="Methylthiotransferase_N"/>
</dbReference>
<dbReference type="InterPro" id="IPR038135">
    <property type="entry name" value="Methylthiotransferase_N_sf"/>
</dbReference>
<dbReference type="InterPro" id="IPR012340">
    <property type="entry name" value="NA-bd_OB-fold"/>
</dbReference>
<dbReference type="InterPro" id="IPR005840">
    <property type="entry name" value="Ribosomal_uS12_MeSTrfase_RimO"/>
</dbReference>
<dbReference type="InterPro" id="IPR007197">
    <property type="entry name" value="rSAM"/>
</dbReference>
<dbReference type="InterPro" id="IPR023404">
    <property type="entry name" value="rSAM_horseshoe"/>
</dbReference>
<dbReference type="InterPro" id="IPR002792">
    <property type="entry name" value="TRAM_dom"/>
</dbReference>
<dbReference type="NCBIfam" id="TIGR01125">
    <property type="entry name" value="30S ribosomal protein S12 methylthiotransferase RimO"/>
    <property type="match status" value="1"/>
</dbReference>
<dbReference type="NCBIfam" id="TIGR00089">
    <property type="entry name" value="MiaB/RimO family radical SAM methylthiotransferase"/>
    <property type="match status" value="1"/>
</dbReference>
<dbReference type="PANTHER" id="PTHR43837">
    <property type="entry name" value="RIBOSOMAL PROTEIN S12 METHYLTHIOTRANSFERASE RIMO"/>
    <property type="match status" value="1"/>
</dbReference>
<dbReference type="PANTHER" id="PTHR43837:SF1">
    <property type="entry name" value="RIBOSOMAL PROTEIN US12 METHYLTHIOTRANSFERASE RIMO"/>
    <property type="match status" value="1"/>
</dbReference>
<dbReference type="Pfam" id="PF04055">
    <property type="entry name" value="Radical_SAM"/>
    <property type="match status" value="1"/>
</dbReference>
<dbReference type="Pfam" id="PF18693">
    <property type="entry name" value="TRAM_2"/>
    <property type="match status" value="1"/>
</dbReference>
<dbReference type="Pfam" id="PF00919">
    <property type="entry name" value="UPF0004"/>
    <property type="match status" value="1"/>
</dbReference>
<dbReference type="SFLD" id="SFLDG01082">
    <property type="entry name" value="B12-binding_domain_containing"/>
    <property type="match status" value="1"/>
</dbReference>
<dbReference type="SFLD" id="SFLDG01061">
    <property type="entry name" value="methylthiotransferase"/>
    <property type="match status" value="1"/>
</dbReference>
<dbReference type="SFLD" id="SFLDF00274">
    <property type="entry name" value="ribosomal_protein_S12_methylth"/>
    <property type="match status" value="1"/>
</dbReference>
<dbReference type="SMART" id="SM00729">
    <property type="entry name" value="Elp3"/>
    <property type="match status" value="1"/>
</dbReference>
<dbReference type="SUPFAM" id="SSF102114">
    <property type="entry name" value="Radical SAM enzymes"/>
    <property type="match status" value="1"/>
</dbReference>
<dbReference type="PROSITE" id="PS51449">
    <property type="entry name" value="MTTASE_N"/>
    <property type="match status" value="1"/>
</dbReference>
<dbReference type="PROSITE" id="PS01278">
    <property type="entry name" value="MTTASE_RADICAL"/>
    <property type="match status" value="1"/>
</dbReference>
<dbReference type="PROSITE" id="PS51918">
    <property type="entry name" value="RADICAL_SAM"/>
    <property type="match status" value="1"/>
</dbReference>
<dbReference type="PROSITE" id="PS50926">
    <property type="entry name" value="TRAM"/>
    <property type="match status" value="1"/>
</dbReference>
<proteinExistence type="inferred from homology"/>
<comment type="function">
    <text evidence="1">Catalyzes the methylthiolation of an aspartic acid residue of ribosomal protein uS12.</text>
</comment>
<comment type="catalytic activity">
    <reaction evidence="1">
        <text>L-aspartate(89)-[ribosomal protein uS12]-hydrogen + (sulfur carrier)-SH + AH2 + 2 S-adenosyl-L-methionine = 3-methylsulfanyl-L-aspartate(89)-[ribosomal protein uS12]-hydrogen + (sulfur carrier)-H + 5'-deoxyadenosine + L-methionine + A + S-adenosyl-L-homocysteine + 2 H(+)</text>
        <dbReference type="Rhea" id="RHEA:37087"/>
        <dbReference type="Rhea" id="RHEA-COMP:10460"/>
        <dbReference type="Rhea" id="RHEA-COMP:10461"/>
        <dbReference type="Rhea" id="RHEA-COMP:14737"/>
        <dbReference type="Rhea" id="RHEA-COMP:14739"/>
        <dbReference type="ChEBI" id="CHEBI:13193"/>
        <dbReference type="ChEBI" id="CHEBI:15378"/>
        <dbReference type="ChEBI" id="CHEBI:17319"/>
        <dbReference type="ChEBI" id="CHEBI:17499"/>
        <dbReference type="ChEBI" id="CHEBI:29917"/>
        <dbReference type="ChEBI" id="CHEBI:29961"/>
        <dbReference type="ChEBI" id="CHEBI:57844"/>
        <dbReference type="ChEBI" id="CHEBI:57856"/>
        <dbReference type="ChEBI" id="CHEBI:59789"/>
        <dbReference type="ChEBI" id="CHEBI:64428"/>
        <dbReference type="ChEBI" id="CHEBI:73599"/>
        <dbReference type="EC" id="2.8.4.4"/>
    </reaction>
</comment>
<comment type="cofactor">
    <cofactor evidence="1">
        <name>[4Fe-4S] cluster</name>
        <dbReference type="ChEBI" id="CHEBI:49883"/>
    </cofactor>
    <text evidence="1">Binds 2 [4Fe-4S] clusters. One cluster is coordinated with 3 cysteines and an exchangeable S-adenosyl-L-methionine.</text>
</comment>
<comment type="subcellular location">
    <subcellularLocation>
        <location evidence="1">Cytoplasm</location>
    </subcellularLocation>
</comment>
<comment type="similarity">
    <text evidence="1">Belongs to the methylthiotransferase family. RimO subfamily.</text>
</comment>
<gene>
    <name evidence="1" type="primary">rimO</name>
    <name type="ordered locus">cce_4437</name>
</gene>
<sequence length="437" mass="49257">MGNKPTISVSHLGCEKNRIDSEHMLGILAQQGYSIDANEELADYVIVNTCSFIQEAREESVRTLVELAEANKKIIISGCMAQHFQEQLLEELPEAVALVGTGDYQKIAEVIQRVETGERVTEVSQNPTFVADEMTPRYRTTNEAVAYLRVAEGCDYRCAFCIIPHLRGNQRSRSIESIVTEAQQLADQGVQEIILISQITTNYGLDLYGEPKLAELLRALGKVDIPWIRIHYAYPTGLTPKVIDAIRDTPNILPYLDLPLQHSHPAILKAMNRPWQGQVNDNIIERLKQSIPNAILRTTFIVGFPGETEEHFEHLINFVQRHEFDHVGVFTFSPEEETPAYQMPNQVPSEIAQARRNYLMEIQQPIAAKKNQKCVGQTVEVLIEQENPTTQEYIGRSIRFAPEVDGVVYVEGEGQLNSIIPVKITDADVYDLYGKVI</sequence>
<evidence type="ECO:0000255" key="1">
    <source>
        <dbReference type="HAMAP-Rule" id="MF_01865"/>
    </source>
</evidence>
<evidence type="ECO:0000255" key="2">
    <source>
        <dbReference type="PROSITE-ProRule" id="PRU01266"/>
    </source>
</evidence>
<organism>
    <name type="scientific">Crocosphaera subtropica (strain ATCC 51142 / BH68)</name>
    <name type="common">Cyanothece sp. (strain ATCC 51142)</name>
    <dbReference type="NCBI Taxonomy" id="43989"/>
    <lineage>
        <taxon>Bacteria</taxon>
        <taxon>Bacillati</taxon>
        <taxon>Cyanobacteriota</taxon>
        <taxon>Cyanophyceae</taxon>
        <taxon>Oscillatoriophycideae</taxon>
        <taxon>Chroococcales</taxon>
        <taxon>Aphanothecaceae</taxon>
        <taxon>Crocosphaera</taxon>
        <taxon>Crocosphaera subtropica</taxon>
    </lineage>
</organism>
<name>RIMO_CROS5</name>
<keyword id="KW-0004">4Fe-4S</keyword>
<keyword id="KW-0963">Cytoplasm</keyword>
<keyword id="KW-0408">Iron</keyword>
<keyword id="KW-0411">Iron-sulfur</keyword>
<keyword id="KW-0479">Metal-binding</keyword>
<keyword id="KW-1185">Reference proteome</keyword>
<keyword id="KW-0949">S-adenosyl-L-methionine</keyword>
<keyword id="KW-0808">Transferase</keyword>
<accession>B1WUD1</accession>